<name>DSC2_SCHPO</name>
<reference key="1">
    <citation type="journal article" date="2002" name="Nature">
        <title>The genome sequence of Schizosaccharomyces pombe.</title>
        <authorList>
            <person name="Wood V."/>
            <person name="Gwilliam R."/>
            <person name="Rajandream M.A."/>
            <person name="Lyne M.H."/>
            <person name="Lyne R."/>
            <person name="Stewart A."/>
            <person name="Sgouros J.G."/>
            <person name="Peat N."/>
            <person name="Hayles J."/>
            <person name="Baker S.G."/>
            <person name="Basham D."/>
            <person name="Bowman S."/>
            <person name="Brooks K."/>
            <person name="Brown D."/>
            <person name="Brown S."/>
            <person name="Chillingworth T."/>
            <person name="Churcher C.M."/>
            <person name="Collins M."/>
            <person name="Connor R."/>
            <person name="Cronin A."/>
            <person name="Davis P."/>
            <person name="Feltwell T."/>
            <person name="Fraser A."/>
            <person name="Gentles S."/>
            <person name="Goble A."/>
            <person name="Hamlin N."/>
            <person name="Harris D.E."/>
            <person name="Hidalgo J."/>
            <person name="Hodgson G."/>
            <person name="Holroyd S."/>
            <person name="Hornsby T."/>
            <person name="Howarth S."/>
            <person name="Huckle E.J."/>
            <person name="Hunt S."/>
            <person name="Jagels K."/>
            <person name="James K.D."/>
            <person name="Jones L."/>
            <person name="Jones M."/>
            <person name="Leather S."/>
            <person name="McDonald S."/>
            <person name="McLean J."/>
            <person name="Mooney P."/>
            <person name="Moule S."/>
            <person name="Mungall K.L."/>
            <person name="Murphy L.D."/>
            <person name="Niblett D."/>
            <person name="Odell C."/>
            <person name="Oliver K."/>
            <person name="O'Neil S."/>
            <person name="Pearson D."/>
            <person name="Quail M.A."/>
            <person name="Rabbinowitsch E."/>
            <person name="Rutherford K.M."/>
            <person name="Rutter S."/>
            <person name="Saunders D."/>
            <person name="Seeger K."/>
            <person name="Sharp S."/>
            <person name="Skelton J."/>
            <person name="Simmonds M.N."/>
            <person name="Squares R."/>
            <person name="Squares S."/>
            <person name="Stevens K."/>
            <person name="Taylor K."/>
            <person name="Taylor R.G."/>
            <person name="Tivey A."/>
            <person name="Walsh S.V."/>
            <person name="Warren T."/>
            <person name="Whitehead S."/>
            <person name="Woodward J.R."/>
            <person name="Volckaert G."/>
            <person name="Aert R."/>
            <person name="Robben J."/>
            <person name="Grymonprez B."/>
            <person name="Weltjens I."/>
            <person name="Vanstreels E."/>
            <person name="Rieger M."/>
            <person name="Schaefer M."/>
            <person name="Mueller-Auer S."/>
            <person name="Gabel C."/>
            <person name="Fuchs M."/>
            <person name="Duesterhoeft A."/>
            <person name="Fritzc C."/>
            <person name="Holzer E."/>
            <person name="Moestl D."/>
            <person name="Hilbert H."/>
            <person name="Borzym K."/>
            <person name="Langer I."/>
            <person name="Beck A."/>
            <person name="Lehrach H."/>
            <person name="Reinhardt R."/>
            <person name="Pohl T.M."/>
            <person name="Eger P."/>
            <person name="Zimmermann W."/>
            <person name="Wedler H."/>
            <person name="Wambutt R."/>
            <person name="Purnelle B."/>
            <person name="Goffeau A."/>
            <person name="Cadieu E."/>
            <person name="Dreano S."/>
            <person name="Gloux S."/>
            <person name="Lelaure V."/>
            <person name="Mottier S."/>
            <person name="Galibert F."/>
            <person name="Aves S.J."/>
            <person name="Xiang Z."/>
            <person name="Hunt C."/>
            <person name="Moore K."/>
            <person name="Hurst S.M."/>
            <person name="Lucas M."/>
            <person name="Rochet M."/>
            <person name="Gaillardin C."/>
            <person name="Tallada V.A."/>
            <person name="Garzon A."/>
            <person name="Thode G."/>
            <person name="Daga R.R."/>
            <person name="Cruzado L."/>
            <person name="Jimenez J."/>
            <person name="Sanchez M."/>
            <person name="del Rey F."/>
            <person name="Benito J."/>
            <person name="Dominguez A."/>
            <person name="Revuelta J.L."/>
            <person name="Moreno S."/>
            <person name="Armstrong J."/>
            <person name="Forsburg S.L."/>
            <person name="Cerutti L."/>
            <person name="Lowe T."/>
            <person name="McCombie W.R."/>
            <person name="Paulsen I."/>
            <person name="Potashkin J."/>
            <person name="Shpakovski G.V."/>
            <person name="Ussery D."/>
            <person name="Barrell B.G."/>
            <person name="Nurse P."/>
        </authorList>
    </citation>
    <scope>NUCLEOTIDE SEQUENCE [LARGE SCALE GENOMIC DNA]</scope>
    <source>
        <strain>972 / ATCC 24843</strain>
    </source>
</reference>
<reference key="2">
    <citation type="journal article" date="2008" name="J. Proteome Res.">
        <title>Phosphoproteome analysis of fission yeast.</title>
        <authorList>
            <person name="Wilson-Grady J.T."/>
            <person name="Villen J."/>
            <person name="Gygi S.P."/>
        </authorList>
    </citation>
    <scope>PHOSPHORYLATION [LARGE SCALE ANALYSIS] AT SER-264 AND THR-266</scope>
    <scope>IDENTIFICATION BY MASS SPECTROMETRY</scope>
</reference>
<reference key="3">
    <citation type="journal article" date="2011" name="Mol. Cell">
        <title>Yeast SREBP cleavage activation requires the Golgi Dsc E3 ligase complex.</title>
        <authorList>
            <person name="Stewart E.V."/>
            <person name="Nwosu C.C."/>
            <person name="Tong Z."/>
            <person name="Roguev A."/>
            <person name="Cummins T.D."/>
            <person name="Kim D.U."/>
            <person name="Hayles J."/>
            <person name="Park H.O."/>
            <person name="Hoe K.L."/>
            <person name="Powell D.W."/>
            <person name="Krogan N.J."/>
            <person name="Espenshade P.J."/>
        </authorList>
    </citation>
    <scope>FUNCTION</scope>
    <scope>IDENTIFICATION IN THE DCS COMPLEX</scope>
    <scope>SUBCELLULAR LOCATION</scope>
</reference>
<feature type="chain" id="PRO_0000314098" description="DSC E3 ubiquitin ligase complex subunit 2">
    <location>
        <begin position="1"/>
        <end position="372"/>
    </location>
</feature>
<feature type="transmembrane region" description="Helical" evidence="1">
    <location>
        <begin position="26"/>
        <end position="46"/>
    </location>
</feature>
<feature type="transmembrane region" description="Helical" evidence="1">
    <location>
        <begin position="54"/>
        <end position="74"/>
    </location>
</feature>
<feature type="transmembrane region" description="Helical" evidence="1">
    <location>
        <begin position="95"/>
        <end position="115"/>
    </location>
</feature>
<feature type="transmembrane region" description="Helical" evidence="1">
    <location>
        <begin position="126"/>
        <end position="146"/>
    </location>
</feature>
<feature type="transmembrane region" description="Helical" evidence="1">
    <location>
        <begin position="160"/>
        <end position="180"/>
    </location>
</feature>
<feature type="domain" description="UBA">
    <location>
        <begin position="332"/>
        <end position="368"/>
    </location>
</feature>
<feature type="region of interest" description="Disordered" evidence="2">
    <location>
        <begin position="246"/>
        <end position="314"/>
    </location>
</feature>
<feature type="compositionally biased region" description="Polar residues" evidence="2">
    <location>
        <begin position="249"/>
        <end position="268"/>
    </location>
</feature>
<feature type="compositionally biased region" description="Low complexity" evidence="2">
    <location>
        <begin position="269"/>
        <end position="284"/>
    </location>
</feature>
<feature type="compositionally biased region" description="Polar residues" evidence="2">
    <location>
        <begin position="286"/>
        <end position="305"/>
    </location>
</feature>
<feature type="modified residue" description="Phosphoserine" evidence="3">
    <location>
        <position position="264"/>
    </location>
</feature>
<feature type="modified residue" description="Phosphothreonine" evidence="3">
    <location>
        <position position="266"/>
    </location>
</feature>
<accession>Q9UTK7</accession>
<gene>
    <name type="primary">dsc2</name>
    <name type="synonym">ucp14</name>
    <name type="ORF">SPAC1486.02c</name>
</gene>
<keyword id="KW-0333">Golgi apparatus</keyword>
<keyword id="KW-0472">Membrane</keyword>
<keyword id="KW-0597">Phosphoprotein</keyword>
<keyword id="KW-1185">Reference proteome</keyword>
<keyword id="KW-0808">Transferase</keyword>
<keyword id="KW-0812">Transmembrane</keyword>
<keyword id="KW-1133">Transmembrane helix</keyword>
<keyword id="KW-0833">Ubl conjugation pathway</keyword>
<sequence>MSSANIVPSNMGITKFLLLTISTSSVVAGVFALKPFFHINFGLHLLSHYQYWRILLWQFIYWNSTEVFQALFIIYQARDVERLLGSHRFASFCVYMFILGMFVTPIFSFLYSLLFKNLDYIQPGPTFLIFAILYQYYYIVPSTVFVRLFNIKFTDKFQMVIPMIGLAFSHFPSTFINAFLGWTMGMFYHLSLLPGTSWRLPIRFVKPALSPTHVFIRPPYSDMQNASTFNPETLFALPTGLDAERTENENQVENPVSNADANDSPTRQNARATAIASSSNTAASFRNRQQISHPPLGRTSSSSVLPTGPASQLYDMLSGRSERPELGNIREEDINTVQTIMQTSRAQAIQALSQTNDVQRAVELLLEQTADY</sequence>
<organism>
    <name type="scientific">Schizosaccharomyces pombe (strain 972 / ATCC 24843)</name>
    <name type="common">Fission yeast</name>
    <dbReference type="NCBI Taxonomy" id="284812"/>
    <lineage>
        <taxon>Eukaryota</taxon>
        <taxon>Fungi</taxon>
        <taxon>Dikarya</taxon>
        <taxon>Ascomycota</taxon>
        <taxon>Taphrinomycotina</taxon>
        <taxon>Schizosaccharomycetes</taxon>
        <taxon>Schizosaccharomycetales</taxon>
        <taxon>Schizosaccharomycetaceae</taxon>
        <taxon>Schizosaccharomyces</taxon>
    </lineage>
</organism>
<dbReference type="EC" id="2.3.2.27" evidence="5"/>
<dbReference type="EMBL" id="CU329670">
    <property type="protein sequence ID" value="CAB62412.1"/>
    <property type="molecule type" value="Genomic_DNA"/>
</dbReference>
<dbReference type="PIR" id="T50071">
    <property type="entry name" value="T50071"/>
</dbReference>
<dbReference type="RefSeq" id="NP_594090.1">
    <property type="nucleotide sequence ID" value="NM_001019514.2"/>
</dbReference>
<dbReference type="SMR" id="Q9UTK7"/>
<dbReference type="BioGRID" id="279329">
    <property type="interactions" value="180"/>
</dbReference>
<dbReference type="FunCoup" id="Q9UTK7">
    <property type="interactions" value="9"/>
</dbReference>
<dbReference type="STRING" id="284812.Q9UTK7"/>
<dbReference type="iPTMnet" id="Q9UTK7"/>
<dbReference type="PaxDb" id="4896-SPAC1486.02c.1"/>
<dbReference type="EnsemblFungi" id="SPAC1486.02c.1">
    <property type="protein sequence ID" value="SPAC1486.02c.1:pep"/>
    <property type="gene ID" value="SPAC1486.02c"/>
</dbReference>
<dbReference type="GeneID" id="2542884"/>
<dbReference type="KEGG" id="spo:2542884"/>
<dbReference type="PomBase" id="SPAC1486.02c">
    <property type="gene designation" value="dsc2"/>
</dbReference>
<dbReference type="VEuPathDB" id="FungiDB:SPAC1486.02c"/>
<dbReference type="eggNOG" id="KOG4463">
    <property type="taxonomic scope" value="Eukaryota"/>
</dbReference>
<dbReference type="HOGENOM" id="CLU_057574_2_1_1"/>
<dbReference type="InParanoid" id="Q9UTK7"/>
<dbReference type="OMA" id="YDMISGR"/>
<dbReference type="PhylomeDB" id="Q9UTK7"/>
<dbReference type="UniPathway" id="UPA00143"/>
<dbReference type="PRO" id="PR:Q9UTK7"/>
<dbReference type="Proteomes" id="UP000002485">
    <property type="component" value="Chromosome I"/>
</dbReference>
<dbReference type="GO" id="GO:0044695">
    <property type="term" value="C:Dsc E3 ubiquitin ligase complex"/>
    <property type="evidence" value="ECO:0000314"/>
    <property type="project" value="PomBase"/>
</dbReference>
<dbReference type="GO" id="GO:0000139">
    <property type="term" value="C:Golgi membrane"/>
    <property type="evidence" value="ECO:0000314"/>
    <property type="project" value="PomBase"/>
</dbReference>
<dbReference type="GO" id="GO:0016740">
    <property type="term" value="F:transferase activity"/>
    <property type="evidence" value="ECO:0007669"/>
    <property type="project" value="UniProtKB-KW"/>
</dbReference>
<dbReference type="GO" id="GO:0043130">
    <property type="term" value="F:ubiquitin binding"/>
    <property type="evidence" value="ECO:0000314"/>
    <property type="project" value="PomBase"/>
</dbReference>
<dbReference type="GO" id="GO:0031625">
    <property type="term" value="F:ubiquitin protein ligase binding"/>
    <property type="evidence" value="ECO:0000353"/>
    <property type="project" value="PomBase"/>
</dbReference>
<dbReference type="GO" id="GO:0016567">
    <property type="term" value="P:protein ubiquitination"/>
    <property type="evidence" value="ECO:0007669"/>
    <property type="project" value="UniProtKB-UniPathway"/>
</dbReference>
<dbReference type="GO" id="GO:0032933">
    <property type="term" value="P:SREBP signaling pathway"/>
    <property type="evidence" value="ECO:0000315"/>
    <property type="project" value="PomBase"/>
</dbReference>
<comment type="function">
    <text evidence="4">Component of the DSC E3 ubiquitin ligase complex which is required for the sre1 transcriptional activator proteolytic cleavage to release the soluble transcription factor from the membrane in low oxygen or sterol conditions. The complex also plays an important role in the multivesicular body (MVB) pathway and functions in a post-endoplasmic reticulum pathway for protein degradation.</text>
</comment>
<comment type="catalytic activity">
    <reaction evidence="5">
        <text>S-ubiquitinyl-[E2 ubiquitin-conjugating enzyme]-L-cysteine + [acceptor protein]-L-lysine = [E2 ubiquitin-conjugating enzyme]-L-cysteine + N(6)-ubiquitinyl-[acceptor protein]-L-lysine.</text>
        <dbReference type="EC" id="2.3.2.27"/>
    </reaction>
</comment>
<comment type="pathway">
    <text>Protein modification; protein ubiquitination.</text>
</comment>
<comment type="subunit">
    <text evidence="4">Component of the DSC E3 ubiquitin ligase complex composed of dsc1, dsc2, dsc3 and dsc4.</text>
</comment>
<comment type="subcellular location">
    <subcellularLocation>
        <location evidence="4">Golgi apparatus membrane</location>
        <topology evidence="4">Multi-pass membrane protein</topology>
    </subcellularLocation>
</comment>
<protein>
    <recommendedName>
        <fullName>DSC E3 ubiquitin ligase complex subunit 2</fullName>
        <ecNumber evidence="5">2.3.2.27</ecNumber>
    </recommendedName>
    <alternativeName>
        <fullName>Defective for SREBP cleavage protein 2</fullName>
    </alternativeName>
    <alternativeName>
        <fullName evidence="5">RING-type E3 ubiquitin transferase DSC2</fullName>
    </alternativeName>
    <alternativeName>
        <fullName>UBA domain-containing protein 14</fullName>
    </alternativeName>
</protein>
<proteinExistence type="evidence at protein level"/>
<evidence type="ECO:0000255" key="1"/>
<evidence type="ECO:0000256" key="2">
    <source>
        <dbReference type="SAM" id="MobiDB-lite"/>
    </source>
</evidence>
<evidence type="ECO:0000269" key="3">
    <source>
    </source>
</evidence>
<evidence type="ECO:0000269" key="4">
    <source>
    </source>
</evidence>
<evidence type="ECO:0000305" key="5"/>